<reference key="1">
    <citation type="journal article" date="2006" name="Mol. Genet. Genomics">
        <title>The chloroplast genome of Nicotiana sylvestris and Nicotiana tomentosiformis: complete sequencing confirms that the Nicotiana sylvestris progenitor is the maternal genome donor of Nicotiana tabacum.</title>
        <authorList>
            <person name="Yukawa M."/>
            <person name="Tsudzuki T."/>
            <person name="Sugiura M."/>
        </authorList>
    </citation>
    <scope>NUCLEOTIDE SEQUENCE [LARGE SCALE GENOMIC DNA]</scope>
</reference>
<gene>
    <name evidence="1" type="primary">psbK</name>
</gene>
<comment type="function">
    <text evidence="1">One of the components of the core complex of photosystem II (PSII). PSII is a light-driven water:plastoquinone oxidoreductase that uses light energy to abstract electrons from H(2)O, generating O(2) and a proton gradient subsequently used for ATP formation. It consists of a core antenna complex that captures photons, and an electron transfer chain that converts photonic excitation into a charge separation.</text>
</comment>
<comment type="subunit">
    <text evidence="1">PSII is composed of 1 copy each of membrane proteins PsbA, PsbB, PsbC, PsbD, PsbE, PsbF, PsbH, PsbI, PsbJ, PsbK, PsbL, PsbM, PsbT, PsbX, PsbY, PsbZ, Psb30/Ycf12, at least 3 peripheral proteins of the oxygen-evolving complex and a large number of cofactors. It forms dimeric complexes.</text>
</comment>
<comment type="subcellular location">
    <subcellularLocation>
        <location evidence="1">Plastid</location>
        <location evidence="1">Chloroplast thylakoid membrane</location>
        <topology evidence="1">Single-pass membrane protein</topology>
    </subcellularLocation>
</comment>
<comment type="similarity">
    <text evidence="1">Belongs to the PsbK family.</text>
</comment>
<organism>
    <name type="scientific">Nicotiana tomentosiformis</name>
    <name type="common">Tobacco</name>
    <dbReference type="NCBI Taxonomy" id="4098"/>
    <lineage>
        <taxon>Eukaryota</taxon>
        <taxon>Viridiplantae</taxon>
        <taxon>Streptophyta</taxon>
        <taxon>Embryophyta</taxon>
        <taxon>Tracheophyta</taxon>
        <taxon>Spermatophyta</taxon>
        <taxon>Magnoliopsida</taxon>
        <taxon>eudicotyledons</taxon>
        <taxon>Gunneridae</taxon>
        <taxon>Pentapetalae</taxon>
        <taxon>asterids</taxon>
        <taxon>lamiids</taxon>
        <taxon>Solanales</taxon>
        <taxon>Solanaceae</taxon>
        <taxon>Nicotianoideae</taxon>
        <taxon>Nicotianeae</taxon>
        <taxon>Nicotiana</taxon>
    </lineage>
</organism>
<dbReference type="EMBL" id="AB240139">
    <property type="protein sequence ID" value="BAE47979.1"/>
    <property type="molecule type" value="Genomic_DNA"/>
</dbReference>
<dbReference type="RefSeq" id="YP_398841.1">
    <property type="nucleotide sequence ID" value="NC_007602.1"/>
</dbReference>
<dbReference type="SMR" id="Q33C56"/>
<dbReference type="GeneID" id="3776282"/>
<dbReference type="KEGG" id="nto:3776282"/>
<dbReference type="OrthoDB" id="1673137at2759"/>
<dbReference type="GO" id="GO:0009535">
    <property type="term" value="C:chloroplast thylakoid membrane"/>
    <property type="evidence" value="ECO:0007669"/>
    <property type="project" value="UniProtKB-SubCell"/>
</dbReference>
<dbReference type="GO" id="GO:0009539">
    <property type="term" value="C:photosystem II reaction center"/>
    <property type="evidence" value="ECO:0007669"/>
    <property type="project" value="InterPro"/>
</dbReference>
<dbReference type="GO" id="GO:0015979">
    <property type="term" value="P:photosynthesis"/>
    <property type="evidence" value="ECO:0007669"/>
    <property type="project" value="UniProtKB-UniRule"/>
</dbReference>
<dbReference type="HAMAP" id="MF_00441">
    <property type="entry name" value="PSII_PsbK"/>
    <property type="match status" value="1"/>
</dbReference>
<dbReference type="InterPro" id="IPR003687">
    <property type="entry name" value="PSII_PsbK"/>
</dbReference>
<dbReference type="InterPro" id="IPR037270">
    <property type="entry name" value="PSII_PsbK_sf"/>
</dbReference>
<dbReference type="NCBIfam" id="NF002715">
    <property type="entry name" value="PRK02553.1"/>
    <property type="match status" value="1"/>
</dbReference>
<dbReference type="PANTHER" id="PTHR35325">
    <property type="match status" value="1"/>
</dbReference>
<dbReference type="PANTHER" id="PTHR35325:SF1">
    <property type="entry name" value="PHOTOSYSTEM II REACTION CENTER PROTEIN K"/>
    <property type="match status" value="1"/>
</dbReference>
<dbReference type="Pfam" id="PF02533">
    <property type="entry name" value="PsbK"/>
    <property type="match status" value="1"/>
</dbReference>
<dbReference type="SUPFAM" id="SSF161037">
    <property type="entry name" value="Photosystem II reaction center protein K, PsbK"/>
    <property type="match status" value="1"/>
</dbReference>
<geneLocation type="chloroplast"/>
<sequence length="61" mass="6914">MLNTFSLIGICLNSTLFSSSFFFGKLPEAYAFLNPIVDIMPVIPLFFFLLAFVWQAAVSFR</sequence>
<protein>
    <recommendedName>
        <fullName evidence="1">Photosystem II reaction center protein K</fullName>
        <shortName evidence="1">PSII-K</shortName>
    </recommendedName>
</protein>
<name>PSBK_NICTO</name>
<keyword id="KW-0150">Chloroplast</keyword>
<keyword id="KW-0472">Membrane</keyword>
<keyword id="KW-0602">Photosynthesis</keyword>
<keyword id="KW-0604">Photosystem II</keyword>
<keyword id="KW-0934">Plastid</keyword>
<keyword id="KW-0674">Reaction center</keyword>
<keyword id="KW-0793">Thylakoid</keyword>
<keyword id="KW-0812">Transmembrane</keyword>
<keyword id="KW-1133">Transmembrane helix</keyword>
<accession>Q33C56</accession>
<evidence type="ECO:0000255" key="1">
    <source>
        <dbReference type="HAMAP-Rule" id="MF_00441"/>
    </source>
</evidence>
<proteinExistence type="inferred from homology"/>
<feature type="propeptide" id="PRO_0000276158" evidence="1">
    <location>
        <begin position="1"/>
        <end position="24"/>
    </location>
</feature>
<feature type="chain" id="PRO_0000276159" description="Photosystem II reaction center protein K" evidence="1">
    <location>
        <begin position="25"/>
        <end position="61"/>
    </location>
</feature>
<feature type="transmembrane region" description="Helical" evidence="1">
    <location>
        <begin position="36"/>
        <end position="56"/>
    </location>
</feature>